<gene>
    <name evidence="1" type="primary">pcn</name>
    <name type="ordered locus">Mbur_2193</name>
</gene>
<name>PCNA_METBU</name>
<feature type="chain" id="PRO_1000019171" description="DNA polymerase sliding clamp">
    <location>
        <begin position="1"/>
        <end position="245"/>
    </location>
</feature>
<protein>
    <recommendedName>
        <fullName evidence="1">DNA polymerase sliding clamp</fullName>
    </recommendedName>
    <alternativeName>
        <fullName evidence="1">Proliferating cell nuclear antigen homolog</fullName>
        <shortName evidence="1">PCNA</shortName>
    </alternativeName>
</protein>
<organism>
    <name type="scientific">Methanococcoides burtonii (strain DSM 6242 / NBRC 107633 / OCM 468 / ACE-M)</name>
    <dbReference type="NCBI Taxonomy" id="259564"/>
    <lineage>
        <taxon>Archaea</taxon>
        <taxon>Methanobacteriati</taxon>
        <taxon>Methanobacteriota</taxon>
        <taxon>Stenosarchaea group</taxon>
        <taxon>Methanomicrobia</taxon>
        <taxon>Methanosarcinales</taxon>
        <taxon>Methanosarcinaceae</taxon>
        <taxon>Methanococcoides</taxon>
    </lineage>
</organism>
<reference key="1">
    <citation type="journal article" date="2009" name="ISME J.">
        <title>The genome sequence of the psychrophilic archaeon, Methanococcoides burtonii: the role of genome evolution in cold adaptation.</title>
        <authorList>
            <person name="Allen M.A."/>
            <person name="Lauro F.M."/>
            <person name="Williams T.J."/>
            <person name="Burg D."/>
            <person name="Siddiqui K.S."/>
            <person name="De Francisci D."/>
            <person name="Chong K.W."/>
            <person name="Pilak O."/>
            <person name="Chew H.H."/>
            <person name="De Maere M.Z."/>
            <person name="Ting L."/>
            <person name="Katrib M."/>
            <person name="Ng C."/>
            <person name="Sowers K.R."/>
            <person name="Galperin M.Y."/>
            <person name="Anderson I.J."/>
            <person name="Ivanova N."/>
            <person name="Dalin E."/>
            <person name="Martinez M."/>
            <person name="Lapidus A."/>
            <person name="Hauser L."/>
            <person name="Land M."/>
            <person name="Thomas T."/>
            <person name="Cavicchioli R."/>
        </authorList>
    </citation>
    <scope>NUCLEOTIDE SEQUENCE [LARGE SCALE GENOMIC DNA]</scope>
    <source>
        <strain>DSM 6242 / NBRC 107633 / OCM 468 / ACE-M</strain>
    </source>
</reference>
<accession>Q12U18</accession>
<proteinExistence type="inferred from homology"/>
<keyword id="KW-0235">DNA replication</keyword>
<keyword id="KW-0238">DNA-binding</keyword>
<dbReference type="EMBL" id="CP000300">
    <property type="protein sequence ID" value="ABE53058.1"/>
    <property type="molecule type" value="Genomic_DNA"/>
</dbReference>
<dbReference type="RefSeq" id="WP_011500194.1">
    <property type="nucleotide sequence ID" value="NC_007955.1"/>
</dbReference>
<dbReference type="SMR" id="Q12U18"/>
<dbReference type="STRING" id="259564.Mbur_2193"/>
<dbReference type="GeneID" id="3998804"/>
<dbReference type="KEGG" id="mbu:Mbur_2193"/>
<dbReference type="HOGENOM" id="CLU_043978_1_1_2"/>
<dbReference type="OrthoDB" id="14749at2157"/>
<dbReference type="Proteomes" id="UP000001979">
    <property type="component" value="Chromosome"/>
</dbReference>
<dbReference type="GO" id="GO:0003677">
    <property type="term" value="F:DNA binding"/>
    <property type="evidence" value="ECO:0007669"/>
    <property type="project" value="UniProtKB-UniRule"/>
</dbReference>
<dbReference type="GO" id="GO:0030337">
    <property type="term" value="F:DNA polymerase processivity factor activity"/>
    <property type="evidence" value="ECO:0007669"/>
    <property type="project" value="UniProtKB-UniRule"/>
</dbReference>
<dbReference type="GO" id="GO:0006272">
    <property type="term" value="P:leading strand elongation"/>
    <property type="evidence" value="ECO:0007669"/>
    <property type="project" value="TreeGrafter"/>
</dbReference>
<dbReference type="GO" id="GO:0006275">
    <property type="term" value="P:regulation of DNA replication"/>
    <property type="evidence" value="ECO:0007669"/>
    <property type="project" value="UniProtKB-UniRule"/>
</dbReference>
<dbReference type="CDD" id="cd00577">
    <property type="entry name" value="PCNA"/>
    <property type="match status" value="1"/>
</dbReference>
<dbReference type="Gene3D" id="3.70.10.10">
    <property type="match status" value="1"/>
</dbReference>
<dbReference type="HAMAP" id="MF_00317">
    <property type="entry name" value="DNApol_clamp_arch"/>
    <property type="match status" value="1"/>
</dbReference>
<dbReference type="InterPro" id="IPR046938">
    <property type="entry name" value="DNA_clamp_sf"/>
</dbReference>
<dbReference type="InterPro" id="IPR000730">
    <property type="entry name" value="Pr_cel_nuc_antig"/>
</dbReference>
<dbReference type="InterPro" id="IPR022649">
    <property type="entry name" value="Pr_cel_nuc_antig_C"/>
</dbReference>
<dbReference type="InterPro" id="IPR022659">
    <property type="entry name" value="Pr_cel_nuc_antig_CS"/>
</dbReference>
<dbReference type="InterPro" id="IPR022648">
    <property type="entry name" value="Pr_cel_nuc_antig_N"/>
</dbReference>
<dbReference type="NCBIfam" id="NF002222">
    <property type="entry name" value="PRK01115.1-5"/>
    <property type="match status" value="1"/>
</dbReference>
<dbReference type="PANTHER" id="PTHR11352">
    <property type="entry name" value="PROLIFERATING CELL NUCLEAR ANTIGEN"/>
    <property type="match status" value="1"/>
</dbReference>
<dbReference type="PANTHER" id="PTHR11352:SF0">
    <property type="entry name" value="PROLIFERATING CELL NUCLEAR ANTIGEN"/>
    <property type="match status" value="1"/>
</dbReference>
<dbReference type="Pfam" id="PF02747">
    <property type="entry name" value="PCNA_C"/>
    <property type="match status" value="1"/>
</dbReference>
<dbReference type="Pfam" id="PF00705">
    <property type="entry name" value="PCNA_N"/>
    <property type="match status" value="1"/>
</dbReference>
<dbReference type="PRINTS" id="PR00339">
    <property type="entry name" value="PCNACYCLIN"/>
</dbReference>
<dbReference type="SUPFAM" id="SSF55979">
    <property type="entry name" value="DNA clamp"/>
    <property type="match status" value="2"/>
</dbReference>
<dbReference type="PROSITE" id="PS01251">
    <property type="entry name" value="PCNA_1"/>
    <property type="match status" value="1"/>
</dbReference>
<comment type="function">
    <text evidence="1">Sliding clamp subunit that acts as a moving platform for DNA processing. Responsible for tethering the catalytic subunit of DNA polymerase and other proteins to DNA during high-speed replication.</text>
</comment>
<comment type="subunit">
    <text evidence="1">Homotrimer. The subunits circularize to form a toroid; DNA passes through its center. Replication factor C (RFC) is required to load the toroid on the DNA.</text>
</comment>
<comment type="similarity">
    <text evidence="1">Belongs to the PCNA family.</text>
</comment>
<sequence length="245" mass="27121">MFKATIDAYLLKDSIETLSVLVDEARFRISPEGVVVRAVDPANVAMVSFDLTPEAFDDFEANDCELGLDLSRINDILGVADRDDKVQMELDEESKKLKIQIGGFSYTISLLDPSTIRAEPRIPQLELPAEIVLNGKDLQKAVKAAEKISDHMLLGVEGESFFMEAEGDTDRVKLTMTRDQLIDIKPSQVRSLFSLDYLSDIIKPASKSNEISLHLGNDFPIKINFSIANGKGTIGYLLAPRIESD</sequence>
<evidence type="ECO:0000255" key="1">
    <source>
        <dbReference type="HAMAP-Rule" id="MF_00317"/>
    </source>
</evidence>